<proteinExistence type="inferred from homology"/>
<accession>B2G5U0</accession>
<dbReference type="EMBL" id="AP007281">
    <property type="protein sequence ID" value="BAG24822.1"/>
    <property type="molecule type" value="Genomic_DNA"/>
</dbReference>
<dbReference type="RefSeq" id="WP_003667360.1">
    <property type="nucleotide sequence ID" value="NC_010609.1"/>
</dbReference>
<dbReference type="SMR" id="B2G5U0"/>
<dbReference type="KEGG" id="lrf:LAR_0306"/>
<dbReference type="HOGENOM" id="CLU_095787_0_0_9"/>
<dbReference type="GO" id="GO:0005886">
    <property type="term" value="C:plasma membrane"/>
    <property type="evidence" value="ECO:0007669"/>
    <property type="project" value="UniProtKB-SubCell"/>
</dbReference>
<dbReference type="GO" id="GO:0008381">
    <property type="term" value="F:mechanosensitive monoatomic ion channel activity"/>
    <property type="evidence" value="ECO:0007669"/>
    <property type="project" value="UniProtKB-UniRule"/>
</dbReference>
<dbReference type="Gene3D" id="1.10.1200.120">
    <property type="entry name" value="Large-conductance mechanosensitive channel, MscL, domain 1"/>
    <property type="match status" value="1"/>
</dbReference>
<dbReference type="HAMAP" id="MF_00115">
    <property type="entry name" value="MscL"/>
    <property type="match status" value="1"/>
</dbReference>
<dbReference type="InterPro" id="IPR019823">
    <property type="entry name" value="Mechanosensitive_channel_CS"/>
</dbReference>
<dbReference type="InterPro" id="IPR001185">
    <property type="entry name" value="MS_channel"/>
</dbReference>
<dbReference type="InterPro" id="IPR037673">
    <property type="entry name" value="MSC/AndL"/>
</dbReference>
<dbReference type="InterPro" id="IPR036019">
    <property type="entry name" value="MscL_channel"/>
</dbReference>
<dbReference type="NCBIfam" id="TIGR00220">
    <property type="entry name" value="mscL"/>
    <property type="match status" value="1"/>
</dbReference>
<dbReference type="NCBIfam" id="NF001842">
    <property type="entry name" value="PRK00567.1-3"/>
    <property type="match status" value="1"/>
</dbReference>
<dbReference type="PANTHER" id="PTHR30266:SF2">
    <property type="entry name" value="LARGE-CONDUCTANCE MECHANOSENSITIVE CHANNEL"/>
    <property type="match status" value="1"/>
</dbReference>
<dbReference type="PANTHER" id="PTHR30266">
    <property type="entry name" value="MECHANOSENSITIVE CHANNEL MSCL"/>
    <property type="match status" value="1"/>
</dbReference>
<dbReference type="Pfam" id="PF01741">
    <property type="entry name" value="MscL"/>
    <property type="match status" value="1"/>
</dbReference>
<dbReference type="PRINTS" id="PR01264">
    <property type="entry name" value="MECHCHANNEL"/>
</dbReference>
<dbReference type="SUPFAM" id="SSF81330">
    <property type="entry name" value="Gated mechanosensitive channel"/>
    <property type="match status" value="1"/>
</dbReference>
<dbReference type="PROSITE" id="PS01327">
    <property type="entry name" value="MSCL"/>
    <property type="match status" value="1"/>
</dbReference>
<comment type="function">
    <text evidence="1">Channel that opens in response to stretch forces in the membrane lipid bilayer. May participate in the regulation of osmotic pressure changes within the cell.</text>
</comment>
<comment type="subunit">
    <text evidence="1">Homopentamer.</text>
</comment>
<comment type="subcellular location">
    <subcellularLocation>
        <location evidence="1">Cell membrane</location>
        <topology evidence="1">Multi-pass membrane protein</topology>
    </subcellularLocation>
</comment>
<comment type="similarity">
    <text evidence="1">Belongs to the MscL family.</text>
</comment>
<organism>
    <name type="scientific">Limosilactobacillus reuteri subsp. reuteri (strain JCM 1112)</name>
    <name type="common">Lactobacillus reuteri</name>
    <dbReference type="NCBI Taxonomy" id="557433"/>
    <lineage>
        <taxon>Bacteria</taxon>
        <taxon>Bacillati</taxon>
        <taxon>Bacillota</taxon>
        <taxon>Bacilli</taxon>
        <taxon>Lactobacillales</taxon>
        <taxon>Lactobacillaceae</taxon>
        <taxon>Limosilactobacillus</taxon>
    </lineage>
</organism>
<name>MSCL_LIMRJ</name>
<feature type="chain" id="PRO_1000094901" description="Large-conductance mechanosensitive channel">
    <location>
        <begin position="1"/>
        <end position="123"/>
    </location>
</feature>
<feature type="transmembrane region" description="Helical" evidence="1">
    <location>
        <begin position="14"/>
        <end position="34"/>
    </location>
</feature>
<feature type="transmembrane region" description="Helical" evidence="1">
    <location>
        <begin position="67"/>
        <end position="87"/>
    </location>
</feature>
<reference key="1">
    <citation type="journal article" date="2008" name="DNA Res.">
        <title>Comparative genome analysis of Lactobacillus reuteri and Lactobacillus fermentum reveal a genomic island for reuterin and cobalamin production.</title>
        <authorList>
            <person name="Morita H."/>
            <person name="Toh H."/>
            <person name="Fukuda S."/>
            <person name="Horikawa H."/>
            <person name="Oshima K."/>
            <person name="Suzuki T."/>
            <person name="Murakami M."/>
            <person name="Hisamatsu S."/>
            <person name="Kato Y."/>
            <person name="Takizawa T."/>
            <person name="Fukuoka H."/>
            <person name="Yoshimura T."/>
            <person name="Itoh K."/>
            <person name="O'Sullivan D.J."/>
            <person name="McKay L.L."/>
            <person name="Ohno H."/>
            <person name="Kikuchi J."/>
            <person name="Masaoka T."/>
            <person name="Hattori M."/>
        </authorList>
    </citation>
    <scope>NUCLEOTIDE SEQUENCE [LARGE SCALE GENOMIC DNA]</scope>
    <source>
        <strain>JCM 1112</strain>
    </source>
</reference>
<sequence>MLKEFKTFIARGNVIDMAVGIIVGAAFTSIVKSLVNNLINPLIGLFIGRIDLSNLVLTVGDAQFKYGSFLNAVINFLIISFVVFLMVKAINTFRKKEDKKTEAPSEEVMYLKEITELLKKNKE</sequence>
<evidence type="ECO:0000255" key="1">
    <source>
        <dbReference type="HAMAP-Rule" id="MF_00115"/>
    </source>
</evidence>
<gene>
    <name evidence="1" type="primary">mscL</name>
    <name type="ordered locus">LAR_0306</name>
</gene>
<protein>
    <recommendedName>
        <fullName evidence="1">Large-conductance mechanosensitive channel</fullName>
    </recommendedName>
</protein>
<keyword id="KW-1003">Cell membrane</keyword>
<keyword id="KW-0407">Ion channel</keyword>
<keyword id="KW-0406">Ion transport</keyword>
<keyword id="KW-0472">Membrane</keyword>
<keyword id="KW-0812">Transmembrane</keyword>
<keyword id="KW-1133">Transmembrane helix</keyword>
<keyword id="KW-0813">Transport</keyword>